<evidence type="ECO:0000255" key="1">
    <source>
        <dbReference type="HAMAP-Rule" id="MF_00394"/>
    </source>
</evidence>
<proteinExistence type="inferred from homology"/>
<keyword id="KW-0963">Cytoplasm</keyword>
<keyword id="KW-0444">Lipid biosynthesis</keyword>
<keyword id="KW-0443">Lipid metabolism</keyword>
<keyword id="KW-0520">NAD</keyword>
<keyword id="KW-0521">NADP</keyword>
<keyword id="KW-0547">Nucleotide-binding</keyword>
<keyword id="KW-0560">Oxidoreductase</keyword>
<keyword id="KW-0594">Phospholipid biosynthesis</keyword>
<keyword id="KW-1208">Phospholipid metabolism</keyword>
<keyword id="KW-1185">Reference proteome</keyword>
<accession>Q2GHC3</accession>
<comment type="function">
    <text evidence="1">Catalyzes the reduction of the glycolytic intermediate dihydroxyacetone phosphate (DHAP) to sn-glycerol 3-phosphate (G3P), the key precursor for phospholipid synthesis.</text>
</comment>
<comment type="catalytic activity">
    <reaction evidence="1">
        <text>sn-glycerol 3-phosphate + NAD(+) = dihydroxyacetone phosphate + NADH + H(+)</text>
        <dbReference type="Rhea" id="RHEA:11092"/>
        <dbReference type="ChEBI" id="CHEBI:15378"/>
        <dbReference type="ChEBI" id="CHEBI:57540"/>
        <dbReference type="ChEBI" id="CHEBI:57597"/>
        <dbReference type="ChEBI" id="CHEBI:57642"/>
        <dbReference type="ChEBI" id="CHEBI:57945"/>
        <dbReference type="EC" id="1.1.1.94"/>
    </reaction>
    <physiologicalReaction direction="right-to-left" evidence="1">
        <dbReference type="Rhea" id="RHEA:11094"/>
    </physiologicalReaction>
</comment>
<comment type="catalytic activity">
    <reaction evidence="1">
        <text>sn-glycerol 3-phosphate + NADP(+) = dihydroxyacetone phosphate + NADPH + H(+)</text>
        <dbReference type="Rhea" id="RHEA:11096"/>
        <dbReference type="ChEBI" id="CHEBI:15378"/>
        <dbReference type="ChEBI" id="CHEBI:57597"/>
        <dbReference type="ChEBI" id="CHEBI:57642"/>
        <dbReference type="ChEBI" id="CHEBI:57783"/>
        <dbReference type="ChEBI" id="CHEBI:58349"/>
        <dbReference type="EC" id="1.1.1.94"/>
    </reaction>
    <physiologicalReaction direction="right-to-left" evidence="1">
        <dbReference type="Rhea" id="RHEA:11098"/>
    </physiologicalReaction>
</comment>
<comment type="pathway">
    <text evidence="1">Membrane lipid metabolism; glycerophospholipid metabolism.</text>
</comment>
<comment type="subcellular location">
    <subcellularLocation>
        <location evidence="1">Cytoplasm</location>
    </subcellularLocation>
</comment>
<comment type="similarity">
    <text evidence="1">Belongs to the NAD-dependent glycerol-3-phosphate dehydrogenase family.</text>
</comment>
<name>GPDA_EHRCR</name>
<feature type="chain" id="PRO_0000255309" description="Glycerol-3-phosphate dehydrogenase [NAD(P)+]">
    <location>
        <begin position="1"/>
        <end position="326"/>
    </location>
</feature>
<feature type="active site" description="Proton acceptor" evidence="1">
    <location>
        <position position="191"/>
    </location>
</feature>
<feature type="binding site" evidence="1">
    <location>
        <position position="10"/>
    </location>
    <ligand>
        <name>NADPH</name>
        <dbReference type="ChEBI" id="CHEBI:57783"/>
    </ligand>
</feature>
<feature type="binding site" evidence="1">
    <location>
        <position position="11"/>
    </location>
    <ligand>
        <name>NADPH</name>
        <dbReference type="ChEBI" id="CHEBI:57783"/>
    </ligand>
</feature>
<feature type="binding site" evidence="1">
    <location>
        <position position="31"/>
    </location>
    <ligand>
        <name>NADPH</name>
        <dbReference type="ChEBI" id="CHEBI:57783"/>
    </ligand>
</feature>
<feature type="binding site" evidence="1">
    <location>
        <position position="108"/>
    </location>
    <ligand>
        <name>NADPH</name>
        <dbReference type="ChEBI" id="CHEBI:57783"/>
    </ligand>
</feature>
<feature type="binding site" evidence="1">
    <location>
        <position position="108"/>
    </location>
    <ligand>
        <name>sn-glycerol 3-phosphate</name>
        <dbReference type="ChEBI" id="CHEBI:57597"/>
    </ligand>
</feature>
<feature type="binding site" evidence="1">
    <location>
        <position position="136"/>
    </location>
    <ligand>
        <name>sn-glycerol 3-phosphate</name>
        <dbReference type="ChEBI" id="CHEBI:57597"/>
    </ligand>
</feature>
<feature type="binding site" evidence="1">
    <location>
        <position position="138"/>
    </location>
    <ligand>
        <name>sn-glycerol 3-phosphate</name>
        <dbReference type="ChEBI" id="CHEBI:57597"/>
    </ligand>
</feature>
<feature type="binding site" evidence="1">
    <location>
        <position position="140"/>
    </location>
    <ligand>
        <name>NADPH</name>
        <dbReference type="ChEBI" id="CHEBI:57783"/>
    </ligand>
</feature>
<feature type="binding site" evidence="1">
    <location>
        <position position="191"/>
    </location>
    <ligand>
        <name>sn-glycerol 3-phosphate</name>
        <dbReference type="ChEBI" id="CHEBI:57597"/>
    </ligand>
</feature>
<feature type="binding site" evidence="1">
    <location>
        <position position="246"/>
    </location>
    <ligand>
        <name>sn-glycerol 3-phosphate</name>
        <dbReference type="ChEBI" id="CHEBI:57597"/>
    </ligand>
</feature>
<feature type="binding site" evidence="1">
    <location>
        <position position="256"/>
    </location>
    <ligand>
        <name>sn-glycerol 3-phosphate</name>
        <dbReference type="ChEBI" id="CHEBI:57597"/>
    </ligand>
</feature>
<feature type="binding site" evidence="1">
    <location>
        <position position="257"/>
    </location>
    <ligand>
        <name>NADPH</name>
        <dbReference type="ChEBI" id="CHEBI:57783"/>
    </ligand>
</feature>
<feature type="binding site" evidence="1">
    <location>
        <position position="257"/>
    </location>
    <ligand>
        <name>sn-glycerol 3-phosphate</name>
        <dbReference type="ChEBI" id="CHEBI:57597"/>
    </ligand>
</feature>
<feature type="binding site" evidence="1">
    <location>
        <position position="258"/>
    </location>
    <ligand>
        <name>sn-glycerol 3-phosphate</name>
        <dbReference type="ChEBI" id="CHEBI:57597"/>
    </ligand>
</feature>
<feature type="binding site" evidence="1">
    <location>
        <position position="281"/>
    </location>
    <ligand>
        <name>NADPH</name>
        <dbReference type="ChEBI" id="CHEBI:57783"/>
    </ligand>
</feature>
<feature type="binding site" evidence="1">
    <location>
        <position position="283"/>
    </location>
    <ligand>
        <name>NADPH</name>
        <dbReference type="ChEBI" id="CHEBI:57783"/>
    </ligand>
</feature>
<protein>
    <recommendedName>
        <fullName evidence="1">Glycerol-3-phosphate dehydrogenase [NAD(P)+]</fullName>
        <ecNumber evidence="1">1.1.1.94</ecNumber>
    </recommendedName>
    <alternativeName>
        <fullName evidence="1">NAD(P)(+)-dependent glycerol-3-phosphate dehydrogenase</fullName>
    </alternativeName>
    <alternativeName>
        <fullName evidence="1">NAD(P)H-dependent dihydroxyacetone-phosphate reductase</fullName>
    </alternativeName>
</protein>
<sequence length="326" mass="35137">MKTTILGAGSFGTAIAFALSSNSTSVNLWGRNHTDMQSIAINRKNLKYLPTCKLPENIIVSSNIDEVLSDYSTCIILAVPTQQLRTLCLSIQDKQHIFEKTPLLICSKGIENISLKFPSEIVKEILPNNPAFILSGPSFAKEIAEDLPCTIVLAGENESLGTSIAQKISNKTFKIIYSQDILGVQIGAALKNIIAIACGIVTGKNLGNNAIATVITKGMEEIKTLYAAKNQNINLSTLIGPSCLGDLILTCTTAHSRNMSFGITIGQGADINKMLNNNSKIIEGVSTVKPLISLAKELNIELPICTSIYNLLYKNIPLEKTISDIL</sequence>
<gene>
    <name evidence="1" type="primary">gpsA</name>
    <name type="ordered locus">ECH_0340</name>
</gene>
<dbReference type="EC" id="1.1.1.94" evidence="1"/>
<dbReference type="EMBL" id="CP000236">
    <property type="protein sequence ID" value="ABD45196.1"/>
    <property type="molecule type" value="Genomic_DNA"/>
</dbReference>
<dbReference type="RefSeq" id="WP_011452542.1">
    <property type="nucleotide sequence ID" value="NC_007799.1"/>
</dbReference>
<dbReference type="SMR" id="Q2GHC3"/>
<dbReference type="STRING" id="205920.ECH_0340"/>
<dbReference type="KEGG" id="ech:ECH_0340"/>
<dbReference type="eggNOG" id="COG0240">
    <property type="taxonomic scope" value="Bacteria"/>
</dbReference>
<dbReference type="HOGENOM" id="CLU_033449_0_0_5"/>
<dbReference type="OrthoDB" id="9812273at2"/>
<dbReference type="UniPathway" id="UPA00940"/>
<dbReference type="Proteomes" id="UP000008320">
    <property type="component" value="Chromosome"/>
</dbReference>
<dbReference type="GO" id="GO:0005829">
    <property type="term" value="C:cytosol"/>
    <property type="evidence" value="ECO:0007669"/>
    <property type="project" value="TreeGrafter"/>
</dbReference>
<dbReference type="GO" id="GO:0047952">
    <property type="term" value="F:glycerol-3-phosphate dehydrogenase [NAD(P)+] activity"/>
    <property type="evidence" value="ECO:0007669"/>
    <property type="project" value="UniProtKB-UniRule"/>
</dbReference>
<dbReference type="GO" id="GO:0051287">
    <property type="term" value="F:NAD binding"/>
    <property type="evidence" value="ECO:0007669"/>
    <property type="project" value="InterPro"/>
</dbReference>
<dbReference type="GO" id="GO:0005975">
    <property type="term" value="P:carbohydrate metabolic process"/>
    <property type="evidence" value="ECO:0007669"/>
    <property type="project" value="InterPro"/>
</dbReference>
<dbReference type="GO" id="GO:0046167">
    <property type="term" value="P:glycerol-3-phosphate biosynthetic process"/>
    <property type="evidence" value="ECO:0007669"/>
    <property type="project" value="UniProtKB-UniRule"/>
</dbReference>
<dbReference type="GO" id="GO:0046168">
    <property type="term" value="P:glycerol-3-phosphate catabolic process"/>
    <property type="evidence" value="ECO:0007669"/>
    <property type="project" value="InterPro"/>
</dbReference>
<dbReference type="GO" id="GO:0006650">
    <property type="term" value="P:glycerophospholipid metabolic process"/>
    <property type="evidence" value="ECO:0007669"/>
    <property type="project" value="UniProtKB-UniRule"/>
</dbReference>
<dbReference type="GO" id="GO:0008654">
    <property type="term" value="P:phospholipid biosynthetic process"/>
    <property type="evidence" value="ECO:0007669"/>
    <property type="project" value="UniProtKB-KW"/>
</dbReference>
<dbReference type="FunFam" id="3.40.50.720:FF:000019">
    <property type="entry name" value="Glycerol-3-phosphate dehydrogenase [NAD(P)+]"/>
    <property type="match status" value="1"/>
</dbReference>
<dbReference type="Gene3D" id="1.10.1040.10">
    <property type="entry name" value="N-(1-d-carboxylethyl)-l-norvaline Dehydrogenase, domain 2"/>
    <property type="match status" value="1"/>
</dbReference>
<dbReference type="Gene3D" id="3.40.50.720">
    <property type="entry name" value="NAD(P)-binding Rossmann-like Domain"/>
    <property type="match status" value="1"/>
</dbReference>
<dbReference type="HAMAP" id="MF_00394">
    <property type="entry name" value="NAD_Glyc3P_dehydrog"/>
    <property type="match status" value="1"/>
</dbReference>
<dbReference type="InterPro" id="IPR008927">
    <property type="entry name" value="6-PGluconate_DH-like_C_sf"/>
</dbReference>
<dbReference type="InterPro" id="IPR013328">
    <property type="entry name" value="6PGD_dom2"/>
</dbReference>
<dbReference type="InterPro" id="IPR006168">
    <property type="entry name" value="G3P_DH_NAD-dep"/>
</dbReference>
<dbReference type="InterPro" id="IPR006109">
    <property type="entry name" value="G3P_DH_NAD-dep_C"/>
</dbReference>
<dbReference type="InterPro" id="IPR011128">
    <property type="entry name" value="G3P_DH_NAD-dep_N"/>
</dbReference>
<dbReference type="InterPro" id="IPR036291">
    <property type="entry name" value="NAD(P)-bd_dom_sf"/>
</dbReference>
<dbReference type="NCBIfam" id="NF000940">
    <property type="entry name" value="PRK00094.1-2"/>
    <property type="match status" value="1"/>
</dbReference>
<dbReference type="NCBIfam" id="NF000942">
    <property type="entry name" value="PRK00094.1-4"/>
    <property type="match status" value="1"/>
</dbReference>
<dbReference type="NCBIfam" id="NF011213">
    <property type="entry name" value="PRK14620.1"/>
    <property type="match status" value="1"/>
</dbReference>
<dbReference type="PANTHER" id="PTHR11728">
    <property type="entry name" value="GLYCEROL-3-PHOSPHATE DEHYDROGENASE"/>
    <property type="match status" value="1"/>
</dbReference>
<dbReference type="PANTHER" id="PTHR11728:SF1">
    <property type="entry name" value="GLYCEROL-3-PHOSPHATE DEHYDROGENASE [NAD(+)] 2, CHLOROPLASTIC"/>
    <property type="match status" value="1"/>
</dbReference>
<dbReference type="Pfam" id="PF07479">
    <property type="entry name" value="NAD_Gly3P_dh_C"/>
    <property type="match status" value="1"/>
</dbReference>
<dbReference type="Pfam" id="PF01210">
    <property type="entry name" value="NAD_Gly3P_dh_N"/>
    <property type="match status" value="1"/>
</dbReference>
<dbReference type="PIRSF" id="PIRSF000114">
    <property type="entry name" value="Glycerol-3-P_dh"/>
    <property type="match status" value="1"/>
</dbReference>
<dbReference type="PRINTS" id="PR00077">
    <property type="entry name" value="GPDHDRGNASE"/>
</dbReference>
<dbReference type="SUPFAM" id="SSF48179">
    <property type="entry name" value="6-phosphogluconate dehydrogenase C-terminal domain-like"/>
    <property type="match status" value="1"/>
</dbReference>
<dbReference type="SUPFAM" id="SSF51735">
    <property type="entry name" value="NAD(P)-binding Rossmann-fold domains"/>
    <property type="match status" value="1"/>
</dbReference>
<dbReference type="PROSITE" id="PS00957">
    <property type="entry name" value="NAD_G3PDH"/>
    <property type="match status" value="1"/>
</dbReference>
<reference key="1">
    <citation type="journal article" date="2006" name="PLoS Genet.">
        <title>Comparative genomics of emerging human ehrlichiosis agents.</title>
        <authorList>
            <person name="Dunning Hotopp J.C."/>
            <person name="Lin M."/>
            <person name="Madupu R."/>
            <person name="Crabtree J."/>
            <person name="Angiuoli S.V."/>
            <person name="Eisen J.A."/>
            <person name="Seshadri R."/>
            <person name="Ren Q."/>
            <person name="Wu M."/>
            <person name="Utterback T.R."/>
            <person name="Smith S."/>
            <person name="Lewis M."/>
            <person name="Khouri H."/>
            <person name="Zhang C."/>
            <person name="Niu H."/>
            <person name="Lin Q."/>
            <person name="Ohashi N."/>
            <person name="Zhi N."/>
            <person name="Nelson W.C."/>
            <person name="Brinkac L.M."/>
            <person name="Dodson R.J."/>
            <person name="Rosovitz M.J."/>
            <person name="Sundaram J.P."/>
            <person name="Daugherty S.C."/>
            <person name="Davidsen T."/>
            <person name="Durkin A.S."/>
            <person name="Gwinn M.L."/>
            <person name="Haft D.H."/>
            <person name="Selengut J.D."/>
            <person name="Sullivan S.A."/>
            <person name="Zafar N."/>
            <person name="Zhou L."/>
            <person name="Benahmed F."/>
            <person name="Forberger H."/>
            <person name="Halpin R."/>
            <person name="Mulligan S."/>
            <person name="Robinson J."/>
            <person name="White O."/>
            <person name="Rikihisa Y."/>
            <person name="Tettelin H."/>
        </authorList>
    </citation>
    <scope>NUCLEOTIDE SEQUENCE [LARGE SCALE GENOMIC DNA]</scope>
    <source>
        <strain>ATCC CRL-10679 / Arkansas</strain>
    </source>
</reference>
<organism>
    <name type="scientific">Ehrlichia chaffeensis (strain ATCC CRL-10679 / Arkansas)</name>
    <dbReference type="NCBI Taxonomy" id="205920"/>
    <lineage>
        <taxon>Bacteria</taxon>
        <taxon>Pseudomonadati</taxon>
        <taxon>Pseudomonadota</taxon>
        <taxon>Alphaproteobacteria</taxon>
        <taxon>Rickettsiales</taxon>
        <taxon>Anaplasmataceae</taxon>
        <taxon>Ehrlichia</taxon>
    </lineage>
</organism>